<protein>
    <recommendedName>
        <fullName evidence="1">NAD(P)H-quinone oxidoreductase chain 4, chloroplastic</fullName>
        <ecNumber evidence="1">7.1.1.-</ecNumber>
    </recommendedName>
    <alternativeName>
        <fullName evidence="1">NAD(P)H dehydrogenase, chain 4</fullName>
    </alternativeName>
    <alternativeName>
        <fullName evidence="1">NADH-plastoquinone oxidoreductase chain 4</fullName>
    </alternativeName>
</protein>
<dbReference type="EC" id="7.1.1.-" evidence="1"/>
<dbReference type="EMBL" id="DQ229107">
    <property type="protein sequence ID" value="ABA61909.1"/>
    <property type="molecule type" value="Genomic_DNA"/>
</dbReference>
<dbReference type="RefSeq" id="YP_635798.1">
    <property type="nucleotide sequence ID" value="NC_008097.1"/>
</dbReference>
<dbReference type="SMR" id="Q1ACE9"/>
<dbReference type="GeneID" id="4100279"/>
<dbReference type="GO" id="GO:0009535">
    <property type="term" value="C:chloroplast thylakoid membrane"/>
    <property type="evidence" value="ECO:0007669"/>
    <property type="project" value="UniProtKB-SubCell"/>
</dbReference>
<dbReference type="GO" id="GO:0008137">
    <property type="term" value="F:NADH dehydrogenase (ubiquinone) activity"/>
    <property type="evidence" value="ECO:0007669"/>
    <property type="project" value="InterPro"/>
</dbReference>
<dbReference type="GO" id="GO:0048039">
    <property type="term" value="F:ubiquinone binding"/>
    <property type="evidence" value="ECO:0007669"/>
    <property type="project" value="TreeGrafter"/>
</dbReference>
<dbReference type="GO" id="GO:0042773">
    <property type="term" value="P:ATP synthesis coupled electron transport"/>
    <property type="evidence" value="ECO:0007669"/>
    <property type="project" value="InterPro"/>
</dbReference>
<dbReference type="GO" id="GO:0015990">
    <property type="term" value="P:electron transport coupled proton transport"/>
    <property type="evidence" value="ECO:0007669"/>
    <property type="project" value="TreeGrafter"/>
</dbReference>
<dbReference type="HAMAP" id="MF_00491">
    <property type="entry name" value="NDH1_NuoM"/>
    <property type="match status" value="1"/>
</dbReference>
<dbReference type="InterPro" id="IPR022997">
    <property type="entry name" value="NADH_Q_OxRdtase_chain4"/>
</dbReference>
<dbReference type="InterPro" id="IPR010227">
    <property type="entry name" value="NADH_Q_OxRdtase_chainM/4"/>
</dbReference>
<dbReference type="InterPro" id="IPR003918">
    <property type="entry name" value="NADH_UbQ_OxRdtase"/>
</dbReference>
<dbReference type="InterPro" id="IPR001750">
    <property type="entry name" value="ND/Mrp_TM"/>
</dbReference>
<dbReference type="NCBIfam" id="TIGR01972">
    <property type="entry name" value="NDH_I_M"/>
    <property type="match status" value="1"/>
</dbReference>
<dbReference type="NCBIfam" id="NF009212">
    <property type="entry name" value="PRK12561.1"/>
    <property type="match status" value="1"/>
</dbReference>
<dbReference type="PANTHER" id="PTHR43507:SF21">
    <property type="entry name" value="NAD(P)H-QUINONE OXIDOREDUCTASE CHAIN 4, CHLOROPLASTIC"/>
    <property type="match status" value="1"/>
</dbReference>
<dbReference type="PANTHER" id="PTHR43507">
    <property type="entry name" value="NADH-UBIQUINONE OXIDOREDUCTASE CHAIN 4"/>
    <property type="match status" value="1"/>
</dbReference>
<dbReference type="Pfam" id="PF00361">
    <property type="entry name" value="Proton_antipo_M"/>
    <property type="match status" value="1"/>
</dbReference>
<dbReference type="PRINTS" id="PR01437">
    <property type="entry name" value="NUOXDRDTASE4"/>
</dbReference>
<organism>
    <name type="scientific">Chara vulgaris</name>
    <name type="common">Common stonewort</name>
    <dbReference type="NCBI Taxonomy" id="55564"/>
    <lineage>
        <taxon>Eukaryota</taxon>
        <taxon>Viridiplantae</taxon>
        <taxon>Streptophyta</taxon>
        <taxon>Charophyceae</taxon>
        <taxon>Charales</taxon>
        <taxon>Characeae</taxon>
        <taxon>Chara</taxon>
    </lineage>
</organism>
<reference key="1">
    <citation type="journal article" date="2006" name="Mol. Biol. Evol.">
        <title>The chloroplast genome sequence of Chara vulgaris sheds new light into the closest green algal relatives of land plants.</title>
        <authorList>
            <person name="Turmel M."/>
            <person name="Otis C."/>
            <person name="Lemieux C."/>
        </authorList>
    </citation>
    <scope>NUCLEOTIDE SEQUENCE [LARGE SCALE GENOMIC DNA]</scope>
</reference>
<keyword id="KW-0150">Chloroplast</keyword>
<keyword id="KW-0472">Membrane</keyword>
<keyword id="KW-0520">NAD</keyword>
<keyword id="KW-0521">NADP</keyword>
<keyword id="KW-0934">Plastid</keyword>
<keyword id="KW-0618">Plastoquinone</keyword>
<keyword id="KW-0874">Quinone</keyword>
<keyword id="KW-0793">Thylakoid</keyword>
<keyword id="KW-1278">Translocase</keyword>
<keyword id="KW-0812">Transmembrane</keyword>
<keyword id="KW-1133">Transmembrane helix</keyword>
<name>NU4C_CHAVU</name>
<comment type="catalytic activity">
    <reaction evidence="1">
        <text>a plastoquinone + NADH + (n+1) H(+)(in) = a plastoquinol + NAD(+) + n H(+)(out)</text>
        <dbReference type="Rhea" id="RHEA:42608"/>
        <dbReference type="Rhea" id="RHEA-COMP:9561"/>
        <dbReference type="Rhea" id="RHEA-COMP:9562"/>
        <dbReference type="ChEBI" id="CHEBI:15378"/>
        <dbReference type="ChEBI" id="CHEBI:17757"/>
        <dbReference type="ChEBI" id="CHEBI:57540"/>
        <dbReference type="ChEBI" id="CHEBI:57945"/>
        <dbReference type="ChEBI" id="CHEBI:62192"/>
    </reaction>
</comment>
<comment type="catalytic activity">
    <reaction evidence="1">
        <text>a plastoquinone + NADPH + (n+1) H(+)(in) = a plastoquinol + NADP(+) + n H(+)(out)</text>
        <dbReference type="Rhea" id="RHEA:42612"/>
        <dbReference type="Rhea" id="RHEA-COMP:9561"/>
        <dbReference type="Rhea" id="RHEA-COMP:9562"/>
        <dbReference type="ChEBI" id="CHEBI:15378"/>
        <dbReference type="ChEBI" id="CHEBI:17757"/>
        <dbReference type="ChEBI" id="CHEBI:57783"/>
        <dbReference type="ChEBI" id="CHEBI:58349"/>
        <dbReference type="ChEBI" id="CHEBI:62192"/>
    </reaction>
</comment>
<comment type="subcellular location">
    <subcellularLocation>
        <location evidence="1">Plastid</location>
        <location evidence="1">Chloroplast thylakoid membrane</location>
        <topology evidence="1">Multi-pass membrane protein</topology>
    </subcellularLocation>
</comment>
<comment type="similarity">
    <text evidence="1">Belongs to the complex I subunit 4 family.</text>
</comment>
<proteinExistence type="inferred from homology"/>
<evidence type="ECO:0000255" key="1">
    <source>
        <dbReference type="HAMAP-Rule" id="MF_00491"/>
    </source>
</evidence>
<gene>
    <name evidence="1" type="primary">ndhD</name>
</gene>
<geneLocation type="chloroplast"/>
<accession>Q1ACE9</accession>
<feature type="chain" id="PRO_0000343277" description="NAD(P)H-quinone oxidoreductase chain 4, chloroplastic">
    <location>
        <begin position="1"/>
        <end position="493"/>
    </location>
</feature>
<feature type="transmembrane region" description="Helical" evidence="1">
    <location>
        <begin position="4"/>
        <end position="24"/>
    </location>
</feature>
<feature type="transmembrane region" description="Helical" evidence="1">
    <location>
        <begin position="34"/>
        <end position="54"/>
    </location>
</feature>
<feature type="transmembrane region" description="Helical" evidence="1">
    <location>
        <begin position="87"/>
        <end position="107"/>
    </location>
</feature>
<feature type="transmembrane region" description="Helical" evidence="1">
    <location>
        <begin position="111"/>
        <end position="131"/>
    </location>
</feature>
<feature type="transmembrane region" description="Helical" evidence="1">
    <location>
        <begin position="134"/>
        <end position="154"/>
    </location>
</feature>
<feature type="transmembrane region" description="Helical" evidence="1">
    <location>
        <begin position="167"/>
        <end position="187"/>
    </location>
</feature>
<feature type="transmembrane region" description="Helical" evidence="1">
    <location>
        <begin position="212"/>
        <end position="232"/>
    </location>
</feature>
<feature type="transmembrane region" description="Helical" evidence="1">
    <location>
        <begin position="242"/>
        <end position="262"/>
    </location>
</feature>
<feature type="transmembrane region" description="Helical" evidence="1">
    <location>
        <begin position="276"/>
        <end position="296"/>
    </location>
</feature>
<feature type="transmembrane region" description="Helical" evidence="1">
    <location>
        <begin position="313"/>
        <end position="333"/>
    </location>
</feature>
<feature type="transmembrane region" description="Helical" evidence="1">
    <location>
        <begin position="334"/>
        <end position="354"/>
    </location>
</feature>
<feature type="transmembrane region" description="Helical" evidence="1">
    <location>
        <begin position="385"/>
        <end position="405"/>
    </location>
</feature>
<feature type="transmembrane region" description="Helical" evidence="1">
    <location>
        <begin position="417"/>
        <end position="437"/>
    </location>
</feature>
<feature type="transmembrane region" description="Helical" evidence="1">
    <location>
        <begin position="462"/>
        <end position="482"/>
    </location>
</feature>
<sequence length="493" mass="55877">MNQFPWLSIIILFPLFAAFFIPLLPSRENQTVRWYTLGICLLDFLVMSYIFGYYYDFHNSSFQFKESIEWIPTIGFKWALGVDGLSMGLILLTGLVTTLAVLAAWPITCNPKLFYFLMLVMYSGQIGLFTSQDLFLFFLMWELELIPIYLLISLWGGRRRLYAATKFIFYTAIGSLFLFIATFTVCFYGANIATWHFEDLAEKEYPFILEKILYLGFGFAYAVKLPIIPFHTWLPDTHGEAHYSTCMLLAGILLKMGGYGWIRINMTLFPNAHAYFAPWLVILGTVQIIYAASVCLSQKNLKRRIAYSSISHMGFVLIGICSFTNIGLSGAICQMISHGLIGASLFFLAGTTYDRIRTVSLSEMGGIALKMPKMFSMFTGFSLASLALPTMSGFVAEMMIFLGIISSTFYSPSFRCFIILFQALGVILTPIYLLSMLRQMFYGVDTFHFESMSFIDSGPREVFIIVSLFIPVIIIGLYPNILLSIWQNALSIL</sequence>